<accession>B1VZY7</accession>
<reference key="1">
    <citation type="journal article" date="2008" name="J. Bacteriol.">
        <title>Genome sequence of the streptomycin-producing microorganism Streptomyces griseus IFO 13350.</title>
        <authorList>
            <person name="Ohnishi Y."/>
            <person name="Ishikawa J."/>
            <person name="Hara H."/>
            <person name="Suzuki H."/>
            <person name="Ikenoya M."/>
            <person name="Ikeda H."/>
            <person name="Yamashita A."/>
            <person name="Hattori M."/>
            <person name="Horinouchi S."/>
        </authorList>
    </citation>
    <scope>NUCLEOTIDE SEQUENCE [LARGE SCALE GENOMIC DNA]</scope>
    <source>
        <strain>JCM 4626 / CBS 651.72 / NBRC 13350 / KCC S-0626 / ISP 5235</strain>
    </source>
</reference>
<gene>
    <name evidence="1" type="primary">glyA</name>
    <name type="ordered locus">SGR_2047</name>
</gene>
<comment type="function">
    <text evidence="1">Catalyzes the reversible interconversion of serine and glycine with tetrahydrofolate (THF) serving as the one-carbon carrier. This reaction serves as the major source of one-carbon groups required for the biosynthesis of purines, thymidylate, methionine, and other important biomolecules. Also exhibits THF-independent aldolase activity toward beta-hydroxyamino acids, producing glycine and aldehydes, via a retro-aldol mechanism.</text>
</comment>
<comment type="catalytic activity">
    <reaction evidence="1">
        <text>(6R)-5,10-methylene-5,6,7,8-tetrahydrofolate + glycine + H2O = (6S)-5,6,7,8-tetrahydrofolate + L-serine</text>
        <dbReference type="Rhea" id="RHEA:15481"/>
        <dbReference type="ChEBI" id="CHEBI:15377"/>
        <dbReference type="ChEBI" id="CHEBI:15636"/>
        <dbReference type="ChEBI" id="CHEBI:33384"/>
        <dbReference type="ChEBI" id="CHEBI:57305"/>
        <dbReference type="ChEBI" id="CHEBI:57453"/>
        <dbReference type="EC" id="2.1.2.1"/>
    </reaction>
</comment>
<comment type="cofactor">
    <cofactor evidence="1">
        <name>pyridoxal 5'-phosphate</name>
        <dbReference type="ChEBI" id="CHEBI:597326"/>
    </cofactor>
</comment>
<comment type="pathway">
    <text evidence="1">One-carbon metabolism; tetrahydrofolate interconversion.</text>
</comment>
<comment type="pathway">
    <text evidence="1">Amino-acid biosynthesis; glycine biosynthesis; glycine from L-serine: step 1/1.</text>
</comment>
<comment type="subunit">
    <text evidence="1">Homodimer.</text>
</comment>
<comment type="subcellular location">
    <subcellularLocation>
        <location evidence="1">Cytoplasm</location>
    </subcellularLocation>
</comment>
<comment type="similarity">
    <text evidence="1">Belongs to the SHMT family.</text>
</comment>
<name>GLYA_STRGG</name>
<organism>
    <name type="scientific">Streptomyces griseus subsp. griseus (strain JCM 4626 / CBS 651.72 / NBRC 13350 / KCC S-0626 / ISP 5235)</name>
    <dbReference type="NCBI Taxonomy" id="455632"/>
    <lineage>
        <taxon>Bacteria</taxon>
        <taxon>Bacillati</taxon>
        <taxon>Actinomycetota</taxon>
        <taxon>Actinomycetes</taxon>
        <taxon>Kitasatosporales</taxon>
        <taxon>Streptomycetaceae</taxon>
        <taxon>Streptomyces</taxon>
    </lineage>
</organism>
<keyword id="KW-0028">Amino-acid biosynthesis</keyword>
<keyword id="KW-0963">Cytoplasm</keyword>
<keyword id="KW-0554">One-carbon metabolism</keyword>
<keyword id="KW-0663">Pyridoxal phosphate</keyword>
<keyword id="KW-0808">Transferase</keyword>
<dbReference type="EC" id="2.1.2.1" evidence="1"/>
<dbReference type="EMBL" id="AP009493">
    <property type="protein sequence ID" value="BAG18876.1"/>
    <property type="molecule type" value="Genomic_DNA"/>
</dbReference>
<dbReference type="RefSeq" id="WP_003966122.1">
    <property type="nucleotide sequence ID" value="NC_010572.1"/>
</dbReference>
<dbReference type="SMR" id="B1VZY7"/>
<dbReference type="KEGG" id="sgr:SGR_2047"/>
<dbReference type="eggNOG" id="COG0112">
    <property type="taxonomic scope" value="Bacteria"/>
</dbReference>
<dbReference type="HOGENOM" id="CLU_022477_2_1_11"/>
<dbReference type="UniPathway" id="UPA00193"/>
<dbReference type="UniPathway" id="UPA00288">
    <property type="reaction ID" value="UER01023"/>
</dbReference>
<dbReference type="Proteomes" id="UP000001685">
    <property type="component" value="Chromosome"/>
</dbReference>
<dbReference type="GO" id="GO:0005829">
    <property type="term" value="C:cytosol"/>
    <property type="evidence" value="ECO:0007669"/>
    <property type="project" value="TreeGrafter"/>
</dbReference>
<dbReference type="GO" id="GO:0004372">
    <property type="term" value="F:glycine hydroxymethyltransferase activity"/>
    <property type="evidence" value="ECO:0007669"/>
    <property type="project" value="UniProtKB-UniRule"/>
</dbReference>
<dbReference type="GO" id="GO:0030170">
    <property type="term" value="F:pyridoxal phosphate binding"/>
    <property type="evidence" value="ECO:0007669"/>
    <property type="project" value="UniProtKB-UniRule"/>
</dbReference>
<dbReference type="GO" id="GO:0019264">
    <property type="term" value="P:glycine biosynthetic process from serine"/>
    <property type="evidence" value="ECO:0007669"/>
    <property type="project" value="UniProtKB-UniRule"/>
</dbReference>
<dbReference type="GO" id="GO:0035999">
    <property type="term" value="P:tetrahydrofolate interconversion"/>
    <property type="evidence" value="ECO:0007669"/>
    <property type="project" value="UniProtKB-UniRule"/>
</dbReference>
<dbReference type="CDD" id="cd00378">
    <property type="entry name" value="SHMT"/>
    <property type="match status" value="1"/>
</dbReference>
<dbReference type="FunFam" id="3.40.640.10:FF:000001">
    <property type="entry name" value="Serine hydroxymethyltransferase"/>
    <property type="match status" value="1"/>
</dbReference>
<dbReference type="Gene3D" id="3.90.1150.10">
    <property type="entry name" value="Aspartate Aminotransferase, domain 1"/>
    <property type="match status" value="1"/>
</dbReference>
<dbReference type="Gene3D" id="3.40.640.10">
    <property type="entry name" value="Type I PLP-dependent aspartate aminotransferase-like (Major domain)"/>
    <property type="match status" value="1"/>
</dbReference>
<dbReference type="HAMAP" id="MF_00051">
    <property type="entry name" value="SHMT"/>
    <property type="match status" value="1"/>
</dbReference>
<dbReference type="InterPro" id="IPR015424">
    <property type="entry name" value="PyrdxlP-dep_Trfase"/>
</dbReference>
<dbReference type="InterPro" id="IPR015421">
    <property type="entry name" value="PyrdxlP-dep_Trfase_major"/>
</dbReference>
<dbReference type="InterPro" id="IPR015422">
    <property type="entry name" value="PyrdxlP-dep_Trfase_small"/>
</dbReference>
<dbReference type="InterPro" id="IPR001085">
    <property type="entry name" value="Ser_HO-MeTrfase"/>
</dbReference>
<dbReference type="InterPro" id="IPR049943">
    <property type="entry name" value="Ser_HO-MeTrfase-like"/>
</dbReference>
<dbReference type="InterPro" id="IPR019798">
    <property type="entry name" value="Ser_HO-MeTrfase_PLP_BS"/>
</dbReference>
<dbReference type="InterPro" id="IPR039429">
    <property type="entry name" value="SHMT-like_dom"/>
</dbReference>
<dbReference type="NCBIfam" id="NF000586">
    <property type="entry name" value="PRK00011.1"/>
    <property type="match status" value="1"/>
</dbReference>
<dbReference type="PANTHER" id="PTHR11680">
    <property type="entry name" value="SERINE HYDROXYMETHYLTRANSFERASE"/>
    <property type="match status" value="1"/>
</dbReference>
<dbReference type="PANTHER" id="PTHR11680:SF35">
    <property type="entry name" value="SERINE HYDROXYMETHYLTRANSFERASE 1"/>
    <property type="match status" value="1"/>
</dbReference>
<dbReference type="Pfam" id="PF00464">
    <property type="entry name" value="SHMT"/>
    <property type="match status" value="1"/>
</dbReference>
<dbReference type="PIRSF" id="PIRSF000412">
    <property type="entry name" value="SHMT"/>
    <property type="match status" value="1"/>
</dbReference>
<dbReference type="SUPFAM" id="SSF53383">
    <property type="entry name" value="PLP-dependent transferases"/>
    <property type="match status" value="1"/>
</dbReference>
<dbReference type="PROSITE" id="PS00096">
    <property type="entry name" value="SHMT"/>
    <property type="match status" value="1"/>
</dbReference>
<evidence type="ECO:0000255" key="1">
    <source>
        <dbReference type="HAMAP-Rule" id="MF_00051"/>
    </source>
</evidence>
<feature type="chain" id="PRO_1000091582" description="Serine hydroxymethyltransferase">
    <location>
        <begin position="1"/>
        <end position="419"/>
    </location>
</feature>
<feature type="binding site" evidence="1">
    <location>
        <position position="121"/>
    </location>
    <ligand>
        <name>(6S)-5,6,7,8-tetrahydrofolate</name>
        <dbReference type="ChEBI" id="CHEBI:57453"/>
    </ligand>
</feature>
<feature type="binding site" evidence="1">
    <location>
        <begin position="125"/>
        <end position="127"/>
    </location>
    <ligand>
        <name>(6S)-5,6,7,8-tetrahydrofolate</name>
        <dbReference type="ChEBI" id="CHEBI:57453"/>
    </ligand>
</feature>
<feature type="site" description="Plays an important role in substrate specificity" evidence="1">
    <location>
        <position position="228"/>
    </location>
</feature>
<feature type="modified residue" description="N6-(pyridoxal phosphate)lysine" evidence="1">
    <location>
        <position position="229"/>
    </location>
</feature>
<sequence>MSLLNSSLHELDPDVAAAVDAELHRQQSTLEMIASENFAPVAVMEAQGSVLTNKYAEGYPGRRYYGGCEHVDVVEQIAIDRIKALFGAEAANVQPHSGAQANAAAMFALLKPGDTIMGLNLAHGGHLTHGMKINFSGKLYNVVPYHVDESGVVDMEEVERLAKESQPKLIVAGWSAYPRQLDFAAFRRIADEVGAYLMVDMAHFAGLVAAGLHPNPVPHAHVVTTTTHKTLGGPRGGVILSTQELAKKINSAVFPGQQGGPLEHVIAAKAVSFKIAAGEEFKERQQRTLDGARILAERLVQPDVTEVGVSVLSGGTDVHLVLVDLRNSELDGQQAEDRLHELGITVNRNAIPNDPRPPMVTSGLRIGTPALATRGFGAEDFTEVAEIIAAALKPSYDADDLKARVVALAEKFPLYPGLK</sequence>
<protein>
    <recommendedName>
        <fullName evidence="1">Serine hydroxymethyltransferase</fullName>
        <shortName evidence="1">SHMT</shortName>
        <shortName evidence="1">Serine methylase</shortName>
        <ecNumber evidence="1">2.1.2.1</ecNumber>
    </recommendedName>
</protein>
<proteinExistence type="inferred from homology"/>